<protein>
    <recommendedName>
        <fullName>Non-specific lipid-transfer protein 1</fullName>
        <shortName>LTP 1</shortName>
    </recommendedName>
    <alternativeName>
        <fullName>LpLTP1</fullName>
    </alternativeName>
</protein>
<reference key="1">
    <citation type="submission" date="1996-08" db="EMBL/GenBank/DDBJ databases">
        <title>Developmental and drought-induced expression of members of the lipid transfer protein gene family in the drought tolerant tomato species Lycopersicon pennellii.</title>
        <authorList>
            <person name="Trevino M.B."/>
            <person name="O'Connell M.A."/>
        </authorList>
    </citation>
    <scope>NUCLEOTIDE SEQUENCE [GENOMIC DNA]</scope>
    <source>
        <strain>cv. LA716</strain>
    </source>
</reference>
<proteinExistence type="inferred from homology"/>
<accession>O24037</accession>
<comment type="function">
    <text evidence="1">Plant non-specific lipid-transfer proteins transfer phospholipids as well as galactolipids across membranes. May play a role in wax or cutin deposition in the cell walls of expanding epidermal cells and certain secretory tissues (By similarity).</text>
</comment>
<comment type="similarity">
    <text evidence="3">Belongs to the plant LTP family.</text>
</comment>
<keyword id="KW-1015">Disulfide bond</keyword>
<keyword id="KW-0446">Lipid-binding</keyword>
<keyword id="KW-0732">Signal</keyword>
<keyword id="KW-0813">Transport</keyword>
<evidence type="ECO:0000250" key="1"/>
<evidence type="ECO:0000255" key="2"/>
<evidence type="ECO:0000305" key="3"/>
<dbReference type="EMBL" id="U66465">
    <property type="protein sequence ID" value="AAB07486.1"/>
    <property type="molecule type" value="Genomic_DNA"/>
</dbReference>
<dbReference type="RefSeq" id="XP_015055663.1">
    <property type="nucleotide sequence ID" value="XM_015200177.1"/>
</dbReference>
<dbReference type="SMR" id="O24037"/>
<dbReference type="GeneID" id="107002239"/>
<dbReference type="KEGG" id="spen:107002239"/>
<dbReference type="Proteomes" id="UP000694930">
    <property type="component" value="Chromosome 10"/>
</dbReference>
<dbReference type="GO" id="GO:0008289">
    <property type="term" value="F:lipid binding"/>
    <property type="evidence" value="ECO:0007669"/>
    <property type="project" value="UniProtKB-KW"/>
</dbReference>
<dbReference type="GO" id="GO:0006869">
    <property type="term" value="P:lipid transport"/>
    <property type="evidence" value="ECO:0007669"/>
    <property type="project" value="InterPro"/>
</dbReference>
<dbReference type="CDD" id="cd01960">
    <property type="entry name" value="nsLTP1"/>
    <property type="match status" value="1"/>
</dbReference>
<dbReference type="Gene3D" id="1.10.110.10">
    <property type="entry name" value="Plant lipid-transfer and hydrophobic proteins"/>
    <property type="match status" value="1"/>
</dbReference>
<dbReference type="InterPro" id="IPR036312">
    <property type="entry name" value="Bifun_inhib/LTP/seed_sf"/>
</dbReference>
<dbReference type="InterPro" id="IPR016140">
    <property type="entry name" value="Bifunc_inhib/LTP/seed_store"/>
</dbReference>
<dbReference type="InterPro" id="IPR000528">
    <property type="entry name" value="Plant_nsLTP"/>
</dbReference>
<dbReference type="PANTHER" id="PTHR33076">
    <property type="entry name" value="NON-SPECIFIC LIPID-TRANSFER PROTEIN 2-RELATED"/>
    <property type="match status" value="1"/>
</dbReference>
<dbReference type="Pfam" id="PF00234">
    <property type="entry name" value="Tryp_alpha_amyl"/>
    <property type="match status" value="1"/>
</dbReference>
<dbReference type="PRINTS" id="PR00382">
    <property type="entry name" value="LIPIDTRNSFER"/>
</dbReference>
<dbReference type="SMART" id="SM00499">
    <property type="entry name" value="AAI"/>
    <property type="match status" value="1"/>
</dbReference>
<dbReference type="SUPFAM" id="SSF47699">
    <property type="entry name" value="Bifunctional inhibitor/lipid-transfer protein/seed storage 2S albumin"/>
    <property type="match status" value="1"/>
</dbReference>
<dbReference type="PROSITE" id="PS00597">
    <property type="entry name" value="PLANT_LTP"/>
    <property type="match status" value="1"/>
</dbReference>
<sequence>MEMVSKIACFVLLCMVVVAPHAEALTCGQVTAGLAPCLPYLQGRGPLGGCCGGVKGLLGSAKTTADRKTACTCLKSAANAIKGIDLNKAAGIPSVCKVNIPYKISPSTDCSTVQ</sequence>
<feature type="signal peptide" evidence="2">
    <location>
        <begin position="1"/>
        <end position="23"/>
    </location>
</feature>
<feature type="chain" id="PRO_0000252692" description="Non-specific lipid-transfer protein 1">
    <location>
        <begin position="24"/>
        <end position="114"/>
    </location>
</feature>
<feature type="disulfide bond" evidence="1">
    <location>
        <begin position="27"/>
        <end position="73"/>
    </location>
</feature>
<feature type="disulfide bond" evidence="1">
    <location>
        <begin position="37"/>
        <end position="50"/>
    </location>
</feature>
<feature type="disulfide bond" evidence="1">
    <location>
        <begin position="51"/>
        <end position="96"/>
    </location>
</feature>
<feature type="disulfide bond" evidence="1">
    <location>
        <begin position="71"/>
        <end position="110"/>
    </location>
</feature>
<name>NLTP1_SOLPN</name>
<organism>
    <name type="scientific">Solanum pennellii</name>
    <name type="common">Tomato</name>
    <name type="synonym">Lycopersicon pennellii</name>
    <dbReference type="NCBI Taxonomy" id="28526"/>
    <lineage>
        <taxon>Eukaryota</taxon>
        <taxon>Viridiplantae</taxon>
        <taxon>Streptophyta</taxon>
        <taxon>Embryophyta</taxon>
        <taxon>Tracheophyta</taxon>
        <taxon>Spermatophyta</taxon>
        <taxon>Magnoliopsida</taxon>
        <taxon>eudicotyledons</taxon>
        <taxon>Gunneridae</taxon>
        <taxon>Pentapetalae</taxon>
        <taxon>asterids</taxon>
        <taxon>lamiids</taxon>
        <taxon>Solanales</taxon>
        <taxon>Solanaceae</taxon>
        <taxon>Solanoideae</taxon>
        <taxon>Solaneae</taxon>
        <taxon>Solanum</taxon>
        <taxon>Solanum subgen. Lycopersicon</taxon>
    </lineage>
</organism>
<gene>
    <name type="primary">LTP1</name>
</gene>